<name>HSP1_HORSE</name>
<organism>
    <name type="scientific">Equus caballus</name>
    <name type="common">Horse</name>
    <dbReference type="NCBI Taxonomy" id="9796"/>
    <lineage>
        <taxon>Eukaryota</taxon>
        <taxon>Metazoa</taxon>
        <taxon>Chordata</taxon>
        <taxon>Craniata</taxon>
        <taxon>Vertebrata</taxon>
        <taxon>Euteleostomi</taxon>
        <taxon>Mammalia</taxon>
        <taxon>Eutheria</taxon>
        <taxon>Laurasiatheria</taxon>
        <taxon>Perissodactyla</taxon>
        <taxon>Equidae</taxon>
        <taxon>Equus</taxon>
    </lineage>
</organism>
<dbReference type="EMBL" id="L10654">
    <property type="protein sequence ID" value="AAA30957.1"/>
    <property type="molecule type" value="Genomic_DNA"/>
</dbReference>
<dbReference type="PIR" id="S00228">
    <property type="entry name" value="S00228"/>
</dbReference>
<dbReference type="RefSeq" id="NP_001077065.1">
    <property type="nucleotide sequence ID" value="NM_001083596.2"/>
</dbReference>
<dbReference type="STRING" id="9796.ENSECAP00000017464"/>
<dbReference type="PaxDb" id="9796-ENSECAP00000017464"/>
<dbReference type="GeneID" id="100036554"/>
<dbReference type="KEGG" id="ecb:100036554"/>
<dbReference type="CTD" id="5619"/>
<dbReference type="HOGENOM" id="CLU_214580_0_0_1"/>
<dbReference type="InParanoid" id="P15341"/>
<dbReference type="OMA" id="MARYICC"/>
<dbReference type="Proteomes" id="UP000002281">
    <property type="component" value="Chromosome 13"/>
</dbReference>
<dbReference type="Bgee" id="ENSECAG00000020028">
    <property type="expression patterns" value="Expressed in testis and 2 other cell types or tissues"/>
</dbReference>
<dbReference type="GO" id="GO:0000786">
    <property type="term" value="C:nucleosome"/>
    <property type="evidence" value="ECO:0007669"/>
    <property type="project" value="UniProtKB-KW"/>
</dbReference>
<dbReference type="GO" id="GO:0005634">
    <property type="term" value="C:nucleus"/>
    <property type="evidence" value="ECO:0007669"/>
    <property type="project" value="UniProtKB-SubCell"/>
</dbReference>
<dbReference type="GO" id="GO:0003677">
    <property type="term" value="F:DNA binding"/>
    <property type="evidence" value="ECO:0007669"/>
    <property type="project" value="UniProtKB-KW"/>
</dbReference>
<dbReference type="GO" id="GO:0030261">
    <property type="term" value="P:chromosome condensation"/>
    <property type="evidence" value="ECO:0007669"/>
    <property type="project" value="UniProtKB-KW"/>
</dbReference>
<dbReference type="GO" id="GO:0035092">
    <property type="term" value="P:sperm DNA condensation"/>
    <property type="evidence" value="ECO:0007669"/>
    <property type="project" value="InterPro"/>
</dbReference>
<dbReference type="InterPro" id="IPR000221">
    <property type="entry name" value="Protamine_P1"/>
</dbReference>
<dbReference type="Pfam" id="PF00260">
    <property type="entry name" value="Protamine_P1"/>
    <property type="match status" value="1"/>
</dbReference>
<dbReference type="PROSITE" id="PS00048">
    <property type="entry name" value="PROTAMINE_P1"/>
    <property type="match status" value="1"/>
</dbReference>
<keyword id="KW-0158">Chromosome</keyword>
<keyword id="KW-0217">Developmental protein</keyword>
<keyword id="KW-0221">Differentiation</keyword>
<keyword id="KW-0903">Direct protein sequencing</keyword>
<keyword id="KW-1015">Disulfide bond</keyword>
<keyword id="KW-0226">DNA condensation</keyword>
<keyword id="KW-0238">DNA-binding</keyword>
<keyword id="KW-0544">Nucleosome core</keyword>
<keyword id="KW-0539">Nucleus</keyword>
<keyword id="KW-1185">Reference proteome</keyword>
<keyword id="KW-0744">Spermatogenesis</keyword>
<accession>P15341</accession>
<gene>
    <name type="primary">PRM1</name>
    <name type="synonym">PRM-1</name>
</gene>
<reference key="1">
    <citation type="submission" date="1993-10" db="EMBL/GenBank/DDBJ databases">
        <title>Sequence of a horse protamine-1 (PRM-1) gene and its flanking regions.</title>
        <authorList>
            <person name="Skow L.C."/>
            <person name="Massey V.K."/>
        </authorList>
    </citation>
    <scope>NUCLEOTIDE SEQUENCE [GENOMIC DNA]</scope>
</reference>
<reference key="2">
    <citation type="journal article" date="1987" name="Biochim. Biophys. Acta">
        <title>Isolation and characterization of two protamines St1 and St2 from stallion spermatozoa, and amino-acid sequence of the major protamine St1.</title>
        <authorList>
            <person name="Belaiche D."/>
            <person name="Loir M."/>
            <person name="Kruggle W."/>
            <person name="Sautiere P."/>
        </authorList>
    </citation>
    <scope>PROTEIN SEQUENCE OF 2-50</scope>
</reference>
<reference key="3">
    <citation type="journal article" date="1987" name="Biol. Chem. Hoppe-Seyler">
        <title>The major protamine from stallion sperm. Isolation and amino-acid sequence.</title>
        <authorList>
            <person name="Ammer H."/>
            <person name="Henschen A."/>
        </authorList>
    </citation>
    <scope>PROTEIN SEQUENCE OF 2-49</scope>
</reference>
<evidence type="ECO:0000250" key="1">
    <source>
        <dbReference type="UniProtKB" id="P02318"/>
    </source>
</evidence>
<evidence type="ECO:0000269" key="2">
    <source>
    </source>
</evidence>
<evidence type="ECO:0000269" key="3">
    <source>
    </source>
</evidence>
<evidence type="ECO:0000305" key="4"/>
<comment type="function">
    <text>Protamines substitute for histones in the chromatin of sperm during the haploid phase of spermatogenesis. They compact sperm DNA into a highly condensed, stable and inactive complex.</text>
</comment>
<comment type="subunit">
    <text>Cross-linked by interchain disulfide bonds around the DNA-helix.</text>
</comment>
<comment type="subcellular location">
    <subcellularLocation>
        <location>Nucleus</location>
    </subcellularLocation>
    <subcellularLocation>
        <location>Chromosome</location>
    </subcellularLocation>
</comment>
<comment type="tissue specificity">
    <text>Testis.</text>
</comment>
<comment type="similarity">
    <text evidence="4">Belongs to the protamine P1 family.</text>
</comment>
<sequence>MARYRCCRSQSQSRCRRRRRRRCRRRRRRSVRQRRVCCRRYTVLRCRRRR</sequence>
<feature type="initiator methionine" description="Removed" evidence="2 3">
    <location>
        <position position="1"/>
    </location>
</feature>
<feature type="chain" id="PRO_0000191481" description="Sperm protamine P1">
    <location>
        <begin position="2"/>
        <end position="50"/>
    </location>
</feature>
<feature type="disulfide bond" description="Interchain (with C-23)" evidence="1">
    <location>
        <position position="6"/>
    </location>
</feature>
<feature type="disulfide bond" evidence="1">
    <location>
        <begin position="7"/>
        <end position="15"/>
    </location>
</feature>
<feature type="disulfide bond" description="Interchain (with C-6)" evidence="1">
    <location>
        <position position="23"/>
    </location>
</feature>
<feature type="disulfide bond" description="Interchain (with C-37)" evidence="1">
    <location>
        <position position="37"/>
    </location>
</feature>
<feature type="disulfide bond" evidence="1">
    <location>
        <begin position="38"/>
        <end position="46"/>
    </location>
</feature>
<protein>
    <recommendedName>
        <fullName>Sperm protamine P1</fullName>
    </recommendedName>
    <alternativeName>
        <fullName>Cysteine-rich protamine</fullName>
    </alternativeName>
    <alternativeName>
        <fullName>Protamine ST1</fullName>
    </alternativeName>
</protein>
<proteinExistence type="evidence at protein level"/>